<reference key="1">
    <citation type="journal article" date="2009" name="PLoS Genet.">
        <title>Organised genome dynamics in the Escherichia coli species results in highly diverse adaptive paths.</title>
        <authorList>
            <person name="Touchon M."/>
            <person name="Hoede C."/>
            <person name="Tenaillon O."/>
            <person name="Barbe V."/>
            <person name="Baeriswyl S."/>
            <person name="Bidet P."/>
            <person name="Bingen E."/>
            <person name="Bonacorsi S."/>
            <person name="Bouchier C."/>
            <person name="Bouvet O."/>
            <person name="Calteau A."/>
            <person name="Chiapello H."/>
            <person name="Clermont O."/>
            <person name="Cruveiller S."/>
            <person name="Danchin A."/>
            <person name="Diard M."/>
            <person name="Dossat C."/>
            <person name="Karoui M.E."/>
            <person name="Frapy E."/>
            <person name="Garry L."/>
            <person name="Ghigo J.M."/>
            <person name="Gilles A.M."/>
            <person name="Johnson J."/>
            <person name="Le Bouguenec C."/>
            <person name="Lescat M."/>
            <person name="Mangenot S."/>
            <person name="Martinez-Jehanne V."/>
            <person name="Matic I."/>
            <person name="Nassif X."/>
            <person name="Oztas S."/>
            <person name="Petit M.A."/>
            <person name="Pichon C."/>
            <person name="Rouy Z."/>
            <person name="Ruf C.S."/>
            <person name="Schneider D."/>
            <person name="Tourret J."/>
            <person name="Vacherie B."/>
            <person name="Vallenet D."/>
            <person name="Medigue C."/>
            <person name="Rocha E.P.C."/>
            <person name="Denamur E."/>
        </authorList>
    </citation>
    <scope>NUCLEOTIDE SEQUENCE [LARGE SCALE GENOMIC DNA]</scope>
    <source>
        <strain>ATCC 35469 / DSM 13698 / BCRC 15582 / CCUG 18766 / IAM 14443 / JCM 21226 / LMG 7866 / NBRC 102419 / NCTC 12128 / CDC 0568-73</strain>
    </source>
</reference>
<name>SYM_ESCF3</name>
<protein>
    <recommendedName>
        <fullName evidence="1">Methionine--tRNA ligase</fullName>
        <ecNumber evidence="1">6.1.1.10</ecNumber>
    </recommendedName>
    <alternativeName>
        <fullName evidence="1">Methionyl-tRNA synthetase</fullName>
        <shortName evidence="1">MetRS</shortName>
    </alternativeName>
</protein>
<comment type="function">
    <text evidence="1">Is required not only for elongation of protein synthesis but also for the initiation of all mRNA translation through initiator tRNA(fMet) aminoacylation.</text>
</comment>
<comment type="catalytic activity">
    <reaction evidence="1">
        <text>tRNA(Met) + L-methionine + ATP = L-methionyl-tRNA(Met) + AMP + diphosphate</text>
        <dbReference type="Rhea" id="RHEA:13481"/>
        <dbReference type="Rhea" id="RHEA-COMP:9667"/>
        <dbReference type="Rhea" id="RHEA-COMP:9698"/>
        <dbReference type="ChEBI" id="CHEBI:30616"/>
        <dbReference type="ChEBI" id="CHEBI:33019"/>
        <dbReference type="ChEBI" id="CHEBI:57844"/>
        <dbReference type="ChEBI" id="CHEBI:78442"/>
        <dbReference type="ChEBI" id="CHEBI:78530"/>
        <dbReference type="ChEBI" id="CHEBI:456215"/>
        <dbReference type="EC" id="6.1.1.10"/>
    </reaction>
</comment>
<comment type="cofactor">
    <cofactor evidence="1">
        <name>Zn(2+)</name>
        <dbReference type="ChEBI" id="CHEBI:29105"/>
    </cofactor>
    <text evidence="1">Binds 1 zinc ion per subunit.</text>
</comment>
<comment type="subunit">
    <text evidence="1">Homodimer.</text>
</comment>
<comment type="subcellular location">
    <subcellularLocation>
        <location evidence="1">Cytoplasm</location>
    </subcellularLocation>
</comment>
<comment type="similarity">
    <text evidence="1">Belongs to the class-I aminoacyl-tRNA synthetase family. MetG type 1 subfamily.</text>
</comment>
<proteinExistence type="inferred from homology"/>
<sequence length="677" mass="76301">MTQVAKKILVTCALPYANGSIHLGHMLEHIQADVWVRYQRMRGHEVNFICADDAHGTPIMLKAQQLGITPEQMIGEMSQEHQTDFAGFNISYDNYHSTHSEENRQLSELIYSRLKENGFIKNRTISQLYDPEKGMFLPDRFVKGTCPKCKSPDQYGDNCEVCGATYSPTELIEPKSVVSGATPVMRDSEHFFFDLPSFSEMLQAWTRSGALQEQVANKMQEWFESGLQQWDISRDAPYFGFEIPNAPGKYFYVWLDAPIGYMGSFKNLCDKRGDSVSFDEYWKKDSTAELYHFIGKDIVYFHSLFWPAMLEGSNFRKPTNLFVHGYVTVNGAKMSKSRGTFIKASTWLNHFDADSLRYYYTAKLSSRIDDIDLNLEDFVQRVNADIVNKVVNLASRNAGFINKRFDGVLASELADPQLYKTFTDAAEVIGEAWESREFGKAVREIMALADLANRYVDEQAPWVVAKQEGRDADLQAICSMGINLFRVLMTYLKPVLPKLTERAEAFLNTELTWDGIQQPLLGHKVNPFKALYNRIDMKQVEALVEASKEEVKATTAPVTGPLADDPIQETITFDDFAKVDLRVALIENAEFVEGSDKLLRLTLDLGGEKRNVFSGIRSAYPDPQALIGRHTIMVANLAPRKMRFGISEGMVMAAGPGGKDIFLLSPDAGAKPGHQVK</sequence>
<organism>
    <name type="scientific">Escherichia fergusonii (strain ATCC 35469 / DSM 13698 / CCUG 18766 / IAM 14443 / JCM 21226 / LMG 7866 / NBRC 102419 / NCTC 12128 / CDC 0568-73)</name>
    <dbReference type="NCBI Taxonomy" id="585054"/>
    <lineage>
        <taxon>Bacteria</taxon>
        <taxon>Pseudomonadati</taxon>
        <taxon>Pseudomonadota</taxon>
        <taxon>Gammaproteobacteria</taxon>
        <taxon>Enterobacterales</taxon>
        <taxon>Enterobacteriaceae</taxon>
        <taxon>Escherichia</taxon>
    </lineage>
</organism>
<evidence type="ECO:0000255" key="1">
    <source>
        <dbReference type="HAMAP-Rule" id="MF_00098"/>
    </source>
</evidence>
<dbReference type="EC" id="6.1.1.10" evidence="1"/>
<dbReference type="EMBL" id="CU928158">
    <property type="protein sequence ID" value="CAQ89701.1"/>
    <property type="molecule type" value="Genomic_DNA"/>
</dbReference>
<dbReference type="RefSeq" id="WP_015953546.1">
    <property type="nucleotide sequence ID" value="NC_011740.1"/>
</dbReference>
<dbReference type="SMR" id="B7LV75"/>
<dbReference type="GeneID" id="75056768"/>
<dbReference type="KEGG" id="efe:EFER_2199"/>
<dbReference type="HOGENOM" id="CLU_009710_7_0_6"/>
<dbReference type="OrthoDB" id="9810191at2"/>
<dbReference type="Proteomes" id="UP000000745">
    <property type="component" value="Chromosome"/>
</dbReference>
<dbReference type="GO" id="GO:0005829">
    <property type="term" value="C:cytosol"/>
    <property type="evidence" value="ECO:0007669"/>
    <property type="project" value="TreeGrafter"/>
</dbReference>
<dbReference type="GO" id="GO:0005524">
    <property type="term" value="F:ATP binding"/>
    <property type="evidence" value="ECO:0007669"/>
    <property type="project" value="UniProtKB-UniRule"/>
</dbReference>
<dbReference type="GO" id="GO:0046872">
    <property type="term" value="F:metal ion binding"/>
    <property type="evidence" value="ECO:0007669"/>
    <property type="project" value="UniProtKB-KW"/>
</dbReference>
<dbReference type="GO" id="GO:0004825">
    <property type="term" value="F:methionine-tRNA ligase activity"/>
    <property type="evidence" value="ECO:0007669"/>
    <property type="project" value="UniProtKB-UniRule"/>
</dbReference>
<dbReference type="GO" id="GO:0000049">
    <property type="term" value="F:tRNA binding"/>
    <property type="evidence" value="ECO:0007669"/>
    <property type="project" value="UniProtKB-KW"/>
</dbReference>
<dbReference type="GO" id="GO:0006431">
    <property type="term" value="P:methionyl-tRNA aminoacylation"/>
    <property type="evidence" value="ECO:0007669"/>
    <property type="project" value="UniProtKB-UniRule"/>
</dbReference>
<dbReference type="CDD" id="cd07957">
    <property type="entry name" value="Anticodon_Ia_Met"/>
    <property type="match status" value="1"/>
</dbReference>
<dbReference type="CDD" id="cd00814">
    <property type="entry name" value="MetRS_core"/>
    <property type="match status" value="1"/>
</dbReference>
<dbReference type="CDD" id="cd02800">
    <property type="entry name" value="tRNA_bind_EcMetRS_like"/>
    <property type="match status" value="1"/>
</dbReference>
<dbReference type="FunFam" id="1.10.730.10:FF:000005">
    <property type="entry name" value="Methionine--tRNA ligase"/>
    <property type="match status" value="1"/>
</dbReference>
<dbReference type="FunFam" id="2.20.28.20:FF:000001">
    <property type="entry name" value="Methionine--tRNA ligase"/>
    <property type="match status" value="1"/>
</dbReference>
<dbReference type="FunFam" id="2.40.50.140:FF:000042">
    <property type="entry name" value="Methionine--tRNA ligase"/>
    <property type="match status" value="1"/>
</dbReference>
<dbReference type="Gene3D" id="3.40.50.620">
    <property type="entry name" value="HUPs"/>
    <property type="match status" value="1"/>
</dbReference>
<dbReference type="Gene3D" id="1.10.730.10">
    <property type="entry name" value="Isoleucyl-tRNA Synthetase, Domain 1"/>
    <property type="match status" value="1"/>
</dbReference>
<dbReference type="Gene3D" id="2.20.28.20">
    <property type="entry name" value="Methionyl-tRNA synthetase, Zn-domain"/>
    <property type="match status" value="1"/>
</dbReference>
<dbReference type="Gene3D" id="2.40.50.140">
    <property type="entry name" value="Nucleic acid-binding proteins"/>
    <property type="match status" value="1"/>
</dbReference>
<dbReference type="HAMAP" id="MF_00098">
    <property type="entry name" value="Met_tRNA_synth_type1"/>
    <property type="match status" value="1"/>
</dbReference>
<dbReference type="InterPro" id="IPR001412">
    <property type="entry name" value="aa-tRNA-synth_I_CS"/>
</dbReference>
<dbReference type="InterPro" id="IPR041872">
    <property type="entry name" value="Anticodon_Met"/>
</dbReference>
<dbReference type="InterPro" id="IPR004495">
    <property type="entry name" value="Met-tRNA-synth_bsu_C"/>
</dbReference>
<dbReference type="InterPro" id="IPR023458">
    <property type="entry name" value="Met-tRNA_ligase_1"/>
</dbReference>
<dbReference type="InterPro" id="IPR014758">
    <property type="entry name" value="Met-tRNA_synth"/>
</dbReference>
<dbReference type="InterPro" id="IPR015413">
    <property type="entry name" value="Methionyl/Leucyl_tRNA_Synth"/>
</dbReference>
<dbReference type="InterPro" id="IPR033911">
    <property type="entry name" value="MetRS_core"/>
</dbReference>
<dbReference type="InterPro" id="IPR029038">
    <property type="entry name" value="MetRS_Zn"/>
</dbReference>
<dbReference type="InterPro" id="IPR012340">
    <property type="entry name" value="NA-bd_OB-fold"/>
</dbReference>
<dbReference type="InterPro" id="IPR014729">
    <property type="entry name" value="Rossmann-like_a/b/a_fold"/>
</dbReference>
<dbReference type="InterPro" id="IPR002547">
    <property type="entry name" value="tRNA-bd_dom"/>
</dbReference>
<dbReference type="InterPro" id="IPR009080">
    <property type="entry name" value="tRNAsynth_Ia_anticodon-bd"/>
</dbReference>
<dbReference type="NCBIfam" id="TIGR00398">
    <property type="entry name" value="metG"/>
    <property type="match status" value="1"/>
</dbReference>
<dbReference type="NCBIfam" id="TIGR00399">
    <property type="entry name" value="metG_C_term"/>
    <property type="match status" value="1"/>
</dbReference>
<dbReference type="NCBIfam" id="NF001100">
    <property type="entry name" value="PRK00133.1"/>
    <property type="match status" value="1"/>
</dbReference>
<dbReference type="PANTHER" id="PTHR45765">
    <property type="entry name" value="METHIONINE--TRNA LIGASE"/>
    <property type="match status" value="1"/>
</dbReference>
<dbReference type="PANTHER" id="PTHR45765:SF1">
    <property type="entry name" value="METHIONINE--TRNA LIGASE, CYTOPLASMIC"/>
    <property type="match status" value="1"/>
</dbReference>
<dbReference type="Pfam" id="PF19303">
    <property type="entry name" value="Anticodon_3"/>
    <property type="match status" value="1"/>
</dbReference>
<dbReference type="Pfam" id="PF09334">
    <property type="entry name" value="tRNA-synt_1g"/>
    <property type="match status" value="1"/>
</dbReference>
<dbReference type="Pfam" id="PF01588">
    <property type="entry name" value="tRNA_bind"/>
    <property type="match status" value="1"/>
</dbReference>
<dbReference type="PRINTS" id="PR01041">
    <property type="entry name" value="TRNASYNTHMET"/>
</dbReference>
<dbReference type="SUPFAM" id="SSF47323">
    <property type="entry name" value="Anticodon-binding domain of a subclass of class I aminoacyl-tRNA synthetases"/>
    <property type="match status" value="1"/>
</dbReference>
<dbReference type="SUPFAM" id="SSF57770">
    <property type="entry name" value="Methionyl-tRNA synthetase (MetRS), Zn-domain"/>
    <property type="match status" value="1"/>
</dbReference>
<dbReference type="SUPFAM" id="SSF50249">
    <property type="entry name" value="Nucleic acid-binding proteins"/>
    <property type="match status" value="1"/>
</dbReference>
<dbReference type="SUPFAM" id="SSF52374">
    <property type="entry name" value="Nucleotidylyl transferase"/>
    <property type="match status" value="1"/>
</dbReference>
<dbReference type="PROSITE" id="PS00178">
    <property type="entry name" value="AA_TRNA_LIGASE_I"/>
    <property type="match status" value="1"/>
</dbReference>
<dbReference type="PROSITE" id="PS50886">
    <property type="entry name" value="TRBD"/>
    <property type="match status" value="1"/>
</dbReference>
<gene>
    <name evidence="1" type="primary">metG</name>
    <name type="ordered locus">EFER_2199</name>
</gene>
<accession>B7LV75</accession>
<keyword id="KW-0030">Aminoacyl-tRNA synthetase</keyword>
<keyword id="KW-0067">ATP-binding</keyword>
<keyword id="KW-0963">Cytoplasm</keyword>
<keyword id="KW-0436">Ligase</keyword>
<keyword id="KW-0479">Metal-binding</keyword>
<keyword id="KW-0547">Nucleotide-binding</keyword>
<keyword id="KW-0648">Protein biosynthesis</keyword>
<keyword id="KW-0694">RNA-binding</keyword>
<keyword id="KW-0820">tRNA-binding</keyword>
<keyword id="KW-0862">Zinc</keyword>
<feature type="chain" id="PRO_1000199290" description="Methionine--tRNA ligase">
    <location>
        <begin position="1"/>
        <end position="677"/>
    </location>
</feature>
<feature type="domain" description="tRNA-binding" evidence="1">
    <location>
        <begin position="575"/>
        <end position="677"/>
    </location>
</feature>
<feature type="short sequence motif" description="'HIGH' region">
    <location>
        <begin position="15"/>
        <end position="25"/>
    </location>
</feature>
<feature type="short sequence motif" description="'KMSKS' region">
    <location>
        <begin position="333"/>
        <end position="337"/>
    </location>
</feature>
<feature type="binding site" evidence="1">
    <location>
        <position position="146"/>
    </location>
    <ligand>
        <name>Zn(2+)</name>
        <dbReference type="ChEBI" id="CHEBI:29105"/>
    </ligand>
</feature>
<feature type="binding site" evidence="1">
    <location>
        <position position="149"/>
    </location>
    <ligand>
        <name>Zn(2+)</name>
        <dbReference type="ChEBI" id="CHEBI:29105"/>
    </ligand>
</feature>
<feature type="binding site" evidence="1">
    <location>
        <position position="159"/>
    </location>
    <ligand>
        <name>Zn(2+)</name>
        <dbReference type="ChEBI" id="CHEBI:29105"/>
    </ligand>
</feature>
<feature type="binding site" evidence="1">
    <location>
        <position position="162"/>
    </location>
    <ligand>
        <name>Zn(2+)</name>
        <dbReference type="ChEBI" id="CHEBI:29105"/>
    </ligand>
</feature>
<feature type="binding site" evidence="1">
    <location>
        <position position="336"/>
    </location>
    <ligand>
        <name>ATP</name>
        <dbReference type="ChEBI" id="CHEBI:30616"/>
    </ligand>
</feature>